<feature type="chain" id="PRO_1000135241" description="Nucleoside diphosphate kinase">
    <location>
        <begin position="1"/>
        <end position="147"/>
    </location>
</feature>
<feature type="active site" description="Pros-phosphohistidine intermediate" evidence="1">
    <location>
        <position position="115"/>
    </location>
</feature>
<feature type="binding site" evidence="1">
    <location>
        <position position="9"/>
    </location>
    <ligand>
        <name>ATP</name>
        <dbReference type="ChEBI" id="CHEBI:30616"/>
    </ligand>
</feature>
<feature type="binding site" evidence="1">
    <location>
        <position position="57"/>
    </location>
    <ligand>
        <name>ATP</name>
        <dbReference type="ChEBI" id="CHEBI:30616"/>
    </ligand>
</feature>
<feature type="binding site" evidence="1">
    <location>
        <position position="85"/>
    </location>
    <ligand>
        <name>ATP</name>
        <dbReference type="ChEBI" id="CHEBI:30616"/>
    </ligand>
</feature>
<feature type="binding site" evidence="1">
    <location>
        <position position="91"/>
    </location>
    <ligand>
        <name>ATP</name>
        <dbReference type="ChEBI" id="CHEBI:30616"/>
    </ligand>
</feature>
<feature type="binding site" evidence="1">
    <location>
        <position position="102"/>
    </location>
    <ligand>
        <name>ATP</name>
        <dbReference type="ChEBI" id="CHEBI:30616"/>
    </ligand>
</feature>
<feature type="binding site" evidence="1">
    <location>
        <position position="112"/>
    </location>
    <ligand>
        <name>ATP</name>
        <dbReference type="ChEBI" id="CHEBI:30616"/>
    </ligand>
</feature>
<sequence length="147" mass="16444">MEKTFLMVKPDGVQRNLIGEIVSRFEKKGYQLVGAKLMTVSRELAEEHYAEHKERPFFGELVDFITSGPVFAMVWQGNNVITTARAMMGKTNPVDAASGTIRGDFATSVGMNIIHGSDSPESAEREIGLWFSAEEVLSFEKTIQRWI</sequence>
<reference key="1">
    <citation type="submission" date="2005-03" db="EMBL/GenBank/DDBJ databases">
        <title>Brevibacillus brevis strain 47, complete genome.</title>
        <authorList>
            <person name="Hosoyama A."/>
            <person name="Yamada R."/>
            <person name="Hongo Y."/>
            <person name="Terui Y."/>
            <person name="Ankai A."/>
            <person name="Masuyama W."/>
            <person name="Sekiguchi M."/>
            <person name="Takeda T."/>
            <person name="Asano K."/>
            <person name="Ohji S."/>
            <person name="Ichikawa N."/>
            <person name="Narita S."/>
            <person name="Aoki N."/>
            <person name="Miura H."/>
            <person name="Matsushita S."/>
            <person name="Sekigawa T."/>
            <person name="Yamagata H."/>
            <person name="Yoshikawa H."/>
            <person name="Udaka S."/>
            <person name="Tanikawa S."/>
            <person name="Fujita N."/>
        </authorList>
    </citation>
    <scope>NUCLEOTIDE SEQUENCE [LARGE SCALE GENOMIC DNA]</scope>
    <source>
        <strain>47 / JCM 6285 / NBRC 100599</strain>
    </source>
</reference>
<organism>
    <name type="scientific">Brevibacillus brevis (strain 47 / JCM 6285 / NBRC 100599)</name>
    <dbReference type="NCBI Taxonomy" id="358681"/>
    <lineage>
        <taxon>Bacteria</taxon>
        <taxon>Bacillati</taxon>
        <taxon>Bacillota</taxon>
        <taxon>Bacilli</taxon>
        <taxon>Bacillales</taxon>
        <taxon>Paenibacillaceae</taxon>
        <taxon>Brevibacillus</taxon>
    </lineage>
</organism>
<protein>
    <recommendedName>
        <fullName evidence="1">Nucleoside diphosphate kinase</fullName>
        <shortName evidence="1">NDK</shortName>
        <shortName evidence="1">NDP kinase</shortName>
        <ecNumber evidence="1">2.7.4.6</ecNumber>
    </recommendedName>
    <alternativeName>
        <fullName evidence="1">Nucleoside-2-P kinase</fullName>
    </alternativeName>
</protein>
<proteinExistence type="inferred from homology"/>
<accession>C0ZCD6</accession>
<name>NDK_BREBN</name>
<comment type="function">
    <text evidence="1">Major role in the synthesis of nucleoside triphosphates other than ATP. The ATP gamma phosphate is transferred to the NDP beta phosphate via a ping-pong mechanism, using a phosphorylated active-site intermediate.</text>
</comment>
<comment type="catalytic activity">
    <reaction evidence="1">
        <text>a 2'-deoxyribonucleoside 5'-diphosphate + ATP = a 2'-deoxyribonucleoside 5'-triphosphate + ADP</text>
        <dbReference type="Rhea" id="RHEA:44640"/>
        <dbReference type="ChEBI" id="CHEBI:30616"/>
        <dbReference type="ChEBI" id="CHEBI:61560"/>
        <dbReference type="ChEBI" id="CHEBI:73316"/>
        <dbReference type="ChEBI" id="CHEBI:456216"/>
        <dbReference type="EC" id="2.7.4.6"/>
    </reaction>
</comment>
<comment type="catalytic activity">
    <reaction evidence="1">
        <text>a ribonucleoside 5'-diphosphate + ATP = a ribonucleoside 5'-triphosphate + ADP</text>
        <dbReference type="Rhea" id="RHEA:18113"/>
        <dbReference type="ChEBI" id="CHEBI:30616"/>
        <dbReference type="ChEBI" id="CHEBI:57930"/>
        <dbReference type="ChEBI" id="CHEBI:61557"/>
        <dbReference type="ChEBI" id="CHEBI:456216"/>
        <dbReference type="EC" id="2.7.4.6"/>
    </reaction>
</comment>
<comment type="cofactor">
    <cofactor evidence="1">
        <name>Mg(2+)</name>
        <dbReference type="ChEBI" id="CHEBI:18420"/>
    </cofactor>
</comment>
<comment type="subunit">
    <text evidence="1">Homotetramer.</text>
</comment>
<comment type="subcellular location">
    <subcellularLocation>
        <location evidence="1">Cytoplasm</location>
    </subcellularLocation>
</comment>
<comment type="similarity">
    <text evidence="1">Belongs to the NDK family.</text>
</comment>
<gene>
    <name evidence="1" type="primary">ndk</name>
    <name type="ordered locus">BBR47_24680</name>
</gene>
<evidence type="ECO:0000255" key="1">
    <source>
        <dbReference type="HAMAP-Rule" id="MF_00451"/>
    </source>
</evidence>
<dbReference type="EC" id="2.7.4.6" evidence="1"/>
<dbReference type="EMBL" id="AP008955">
    <property type="protein sequence ID" value="BAH43445.1"/>
    <property type="molecule type" value="Genomic_DNA"/>
</dbReference>
<dbReference type="RefSeq" id="WP_007716560.1">
    <property type="nucleotide sequence ID" value="NC_012491.1"/>
</dbReference>
<dbReference type="SMR" id="C0ZCD6"/>
<dbReference type="STRING" id="358681.BBR47_24680"/>
<dbReference type="GeneID" id="95753287"/>
<dbReference type="KEGG" id="bbe:BBR47_24680"/>
<dbReference type="eggNOG" id="COG0105">
    <property type="taxonomic scope" value="Bacteria"/>
</dbReference>
<dbReference type="HOGENOM" id="CLU_060216_6_3_9"/>
<dbReference type="Proteomes" id="UP000001877">
    <property type="component" value="Chromosome"/>
</dbReference>
<dbReference type="GO" id="GO:0005737">
    <property type="term" value="C:cytoplasm"/>
    <property type="evidence" value="ECO:0007669"/>
    <property type="project" value="UniProtKB-SubCell"/>
</dbReference>
<dbReference type="GO" id="GO:0005524">
    <property type="term" value="F:ATP binding"/>
    <property type="evidence" value="ECO:0007669"/>
    <property type="project" value="UniProtKB-UniRule"/>
</dbReference>
<dbReference type="GO" id="GO:0046872">
    <property type="term" value="F:metal ion binding"/>
    <property type="evidence" value="ECO:0007669"/>
    <property type="project" value="UniProtKB-KW"/>
</dbReference>
<dbReference type="GO" id="GO:0004550">
    <property type="term" value="F:nucleoside diphosphate kinase activity"/>
    <property type="evidence" value="ECO:0007669"/>
    <property type="project" value="UniProtKB-UniRule"/>
</dbReference>
<dbReference type="GO" id="GO:0006241">
    <property type="term" value="P:CTP biosynthetic process"/>
    <property type="evidence" value="ECO:0007669"/>
    <property type="project" value="UniProtKB-UniRule"/>
</dbReference>
<dbReference type="GO" id="GO:0006183">
    <property type="term" value="P:GTP biosynthetic process"/>
    <property type="evidence" value="ECO:0007669"/>
    <property type="project" value="UniProtKB-UniRule"/>
</dbReference>
<dbReference type="GO" id="GO:0006228">
    <property type="term" value="P:UTP biosynthetic process"/>
    <property type="evidence" value="ECO:0007669"/>
    <property type="project" value="UniProtKB-UniRule"/>
</dbReference>
<dbReference type="CDD" id="cd04413">
    <property type="entry name" value="NDPk_I"/>
    <property type="match status" value="1"/>
</dbReference>
<dbReference type="FunFam" id="3.30.70.141:FF:000002">
    <property type="entry name" value="Nucleoside diphosphate kinase"/>
    <property type="match status" value="1"/>
</dbReference>
<dbReference type="Gene3D" id="3.30.70.141">
    <property type="entry name" value="Nucleoside diphosphate kinase-like domain"/>
    <property type="match status" value="1"/>
</dbReference>
<dbReference type="HAMAP" id="MF_00451">
    <property type="entry name" value="NDP_kinase"/>
    <property type="match status" value="1"/>
</dbReference>
<dbReference type="InterPro" id="IPR034907">
    <property type="entry name" value="NDK-like_dom"/>
</dbReference>
<dbReference type="InterPro" id="IPR036850">
    <property type="entry name" value="NDK-like_dom_sf"/>
</dbReference>
<dbReference type="InterPro" id="IPR001564">
    <property type="entry name" value="Nucleoside_diP_kinase"/>
</dbReference>
<dbReference type="InterPro" id="IPR023005">
    <property type="entry name" value="Nucleoside_diP_kinase_AS"/>
</dbReference>
<dbReference type="NCBIfam" id="NF001908">
    <property type="entry name" value="PRK00668.1"/>
    <property type="match status" value="1"/>
</dbReference>
<dbReference type="PANTHER" id="PTHR11349">
    <property type="entry name" value="NUCLEOSIDE DIPHOSPHATE KINASE"/>
    <property type="match status" value="1"/>
</dbReference>
<dbReference type="Pfam" id="PF00334">
    <property type="entry name" value="NDK"/>
    <property type="match status" value="1"/>
</dbReference>
<dbReference type="PRINTS" id="PR01243">
    <property type="entry name" value="NUCDPKINASE"/>
</dbReference>
<dbReference type="SMART" id="SM00562">
    <property type="entry name" value="NDK"/>
    <property type="match status" value="1"/>
</dbReference>
<dbReference type="SUPFAM" id="SSF54919">
    <property type="entry name" value="Nucleoside diphosphate kinase, NDK"/>
    <property type="match status" value="1"/>
</dbReference>
<dbReference type="PROSITE" id="PS00469">
    <property type="entry name" value="NDPK"/>
    <property type="match status" value="1"/>
</dbReference>
<dbReference type="PROSITE" id="PS51374">
    <property type="entry name" value="NDPK_LIKE"/>
    <property type="match status" value="1"/>
</dbReference>
<keyword id="KW-0067">ATP-binding</keyword>
<keyword id="KW-0963">Cytoplasm</keyword>
<keyword id="KW-0418">Kinase</keyword>
<keyword id="KW-0460">Magnesium</keyword>
<keyword id="KW-0479">Metal-binding</keyword>
<keyword id="KW-0546">Nucleotide metabolism</keyword>
<keyword id="KW-0547">Nucleotide-binding</keyword>
<keyword id="KW-0597">Phosphoprotein</keyword>
<keyword id="KW-1185">Reference proteome</keyword>
<keyword id="KW-0808">Transferase</keyword>